<comment type="function">
    <text evidence="2 3 6 8 9 12">Plays an important role in nitrogen catabolite repression. Down-regulates the expression of many genes involved in nitrogen utilization by inhibiting the GATA transcriptional activators GLN3 and GAT1. Under good nitrogen conditions, binds to the phosphorylated forms of GLN3 and GAT1 and sequesters them in the cytoplasm, preventing transcription of genes expressed upon nitrogen limitation. Is also an atypical glutaredoxin without a catalytical cysteine residue. Has glutathione peroxidase and thiol:disulfide oxidoreductase activities in both native and fibrillar form. Also shows insulin disulfide reductase and dehydroascorbic acid reductase (DHAR) activities.</text>
</comment>
<comment type="catalytic activity">
    <reaction evidence="8">
        <text>2 glutathione + H2O2 = glutathione disulfide + 2 H2O</text>
        <dbReference type="Rhea" id="RHEA:16833"/>
        <dbReference type="ChEBI" id="CHEBI:15377"/>
        <dbReference type="ChEBI" id="CHEBI:16240"/>
        <dbReference type="ChEBI" id="CHEBI:57925"/>
        <dbReference type="ChEBI" id="CHEBI:58297"/>
        <dbReference type="EC" id="1.11.1.9"/>
    </reaction>
</comment>
<comment type="biophysicochemical properties">
    <kinetics>
        <KM evidence="8">2.4 mM for bis-(2-hydroxyethyl) disulfide (HEDS)</KM>
        <text>kcat is 1.2 sec(-1) with bis-(2-hydroxyethyl) disulfide (HEDS) as substrate.</text>
    </kinetics>
</comment>
<comment type="subunit">
    <text evidence="4 10">Homodimer. Interacts with NNK1.</text>
</comment>
<comment type="interaction">
    <interactant intactId="EBI-20138">
        <id>P23202</id>
    </interactant>
    <interactant intactId="EBI-7657">
        <id>P18494</id>
        <label>GLN3</label>
    </interactant>
    <organismsDiffer>false</organismsDiffer>
    <experiments>2</experiments>
</comment>
<comment type="interaction">
    <interactant intactId="EBI-20138">
        <id>P23202</id>
    </interactant>
    <interactant intactId="EBI-9796">
        <id>P36003</id>
        <label>NNK1</label>
    </interactant>
    <organismsDiffer>false</organismsDiffer>
    <experiments>4</experiments>
</comment>
<comment type="subcellular location">
    <subcellularLocation>
        <location evidence="2">Cytoplasm</location>
    </subcellularLocation>
</comment>
<comment type="domain">
    <text evidence="7 11">The prion domain (PrD) is a Gln/Asn (Q/N)-rich domain, which is unstructured in its native, soluble form, and which forms a parallel in-register beta-sheet in its amyloid form.</text>
</comment>
<comment type="miscellaneous">
    <text evidence="14 15">[URE3] is the prion form of URE2. [URE3] is the result of a conformational change of the cellular URE2 protein that becomes self-propagating and infectious. This conformational change generates a form of URE2 that assembles into amyloid fibrils. [URE3]-aggregates sequester soluble URE2, which then fails to retain GLN3 in the cytoplasm, resulting in GLN3 activation and consequently derepression of genes that are required for utilization of poor nirogen sources (PubMed:7909170). [URE3] can be cured by GdnHCl and by deletion of the molecular chaperone HSP104, which is required for [URE3] propagation (PubMed:11073991).</text>
</comment>
<comment type="miscellaneous">
    <text evidence="5">Present with 7060 molecules/cell in log phase SD medium.</text>
</comment>
<comment type="similarity">
    <text evidence="13">Belongs to the GST superfamily.</text>
</comment>
<comment type="online information" name="Protein Spotlight">
    <link uri="https://www.proteinspotlight.org/back_issues/047"/>
    <text>Mad yeast disease - Issue 47 of June 2004</text>
</comment>
<gene>
    <name type="primary">URE2</name>
    <name type="ordered locus">YNL229C</name>
    <name type="ORF">N1165</name>
</gene>
<protein>
    <recommendedName>
        <fullName>Transcriptional regulator URE2</fullName>
    </recommendedName>
    <alternativeName>
        <fullName>Disulfide reductase</fullName>
        <ecNumber>1.8.4.-</ecNumber>
    </alternativeName>
    <alternativeName>
        <fullName>Glutathione peroxidase</fullName>
        <ecNumber>1.11.1.9</ecNumber>
    </alternativeName>
</protein>
<accession>P23202</accession>
<accession>D6W0W3</accession>
<reference key="1">
    <citation type="journal article" date="1991" name="Mol. Cell. Biol.">
        <title>The URE2 gene product of Saccharomyces cerevisiae plays an important role in the cellular response to the nitrogen source and has homology to glutathione s-transferases.</title>
        <authorList>
            <person name="Coschigano P.W."/>
            <person name="Magasanik B."/>
        </authorList>
    </citation>
    <scope>NUCLEOTIDE SEQUENCE [GENOMIC DNA]</scope>
    <scope>FUNCTION</scope>
</reference>
<reference key="2">
    <citation type="journal article" date="2002" name="Proc. Natl. Acad. Sci. U.S.A.">
        <title>Conservation of a portion of the S. cerevisiae Ure2p prion domain that interacts with the full-length protein.</title>
        <authorList>
            <person name="Edskes H.K."/>
            <person name="Wickner R.B."/>
        </authorList>
    </citation>
    <scope>NUCLEOTIDE SEQUENCE [GENOMIC DNA]</scope>
    <source>
        <strain>ATCC 14085 / CBS 3093 / IFO 1997 / NRRL Y-12657</strain>
        <strain>ATCC 9804 / CBS 400 / DSM 70478 / IFO 0210 / JCM 2220</strain>
        <strain>Boots</strain>
        <strain>CBS 2087</strain>
        <strain>CBS 4734</strain>
        <strain>CBS 5112</strain>
        <strain>CBS 5287</strain>
        <strain>CBS 7957</strain>
        <strain>Chevalieri / ATCC 10604 / CBS 405 / IFO 0258 / NRRL Y-1546</strain>
        <strain>Fleischmann</strain>
        <strain>McPhie Sourdough</strain>
        <strain>SAF</strain>
        <strain>Sigma 1278B</strain>
        <strain>Wyeast#1007</strain>
        <strain>YJM 143</strain>
        <strain>YJM 280</strain>
        <strain>YJM 320</strain>
        <strain>YJM 326</strain>
        <strain>YJM 415</strain>
    </source>
</reference>
<reference key="3">
    <citation type="journal article" date="1996" name="Yeast">
        <title>The DNA sequence of cosmid 14-5 from chromosome XIV reveals 21 open reading frames including a novel gene encoding a globin-like domain.</title>
        <authorList>
            <person name="Pandolfo D."/>
            <person name="de Antoni A."/>
            <person name="Lanfranchi G."/>
            <person name="Valle G."/>
        </authorList>
    </citation>
    <scope>NUCLEOTIDE SEQUENCE [GENOMIC DNA]</scope>
</reference>
<reference key="4">
    <citation type="journal article" date="1997" name="Nature">
        <title>The nucleotide sequence of Saccharomyces cerevisiae chromosome XIV and its evolutionary implications.</title>
        <authorList>
            <person name="Philippsen P."/>
            <person name="Kleine K."/>
            <person name="Poehlmann R."/>
            <person name="Duesterhoeft A."/>
            <person name="Hamberg K."/>
            <person name="Hegemann J.H."/>
            <person name="Obermaier B."/>
            <person name="Urrestarazu L.A."/>
            <person name="Aert R."/>
            <person name="Albermann K."/>
            <person name="Altmann R."/>
            <person name="Andre B."/>
            <person name="Baladron V."/>
            <person name="Ballesta J.P.G."/>
            <person name="Becam A.-M."/>
            <person name="Beinhauer J.D."/>
            <person name="Boskovic J."/>
            <person name="Buitrago M.J."/>
            <person name="Bussereau F."/>
            <person name="Coster F."/>
            <person name="Crouzet M."/>
            <person name="D'Angelo M."/>
            <person name="Dal Pero F."/>
            <person name="De Antoni A."/>
            <person name="del Rey F."/>
            <person name="Doignon F."/>
            <person name="Domdey H."/>
            <person name="Dubois E."/>
            <person name="Fiedler T.A."/>
            <person name="Fleig U."/>
            <person name="Floeth M."/>
            <person name="Fritz C."/>
            <person name="Gaillardin C."/>
            <person name="Garcia-Cantalejo J.M."/>
            <person name="Glansdorff N."/>
            <person name="Goffeau A."/>
            <person name="Gueldener U."/>
            <person name="Herbert C.J."/>
            <person name="Heumann K."/>
            <person name="Heuss-Neitzel D."/>
            <person name="Hilbert H."/>
            <person name="Hinni K."/>
            <person name="Iraqui Houssaini I."/>
            <person name="Jacquet M."/>
            <person name="Jimenez A."/>
            <person name="Jonniaux J.-L."/>
            <person name="Karpfinger-Hartl L."/>
            <person name="Lanfranchi G."/>
            <person name="Lepingle A."/>
            <person name="Levesque H."/>
            <person name="Lyck R."/>
            <person name="Maftahi M."/>
            <person name="Mallet L."/>
            <person name="Maurer C.T.C."/>
            <person name="Messenguy F."/>
            <person name="Mewes H.-W."/>
            <person name="Moestl D."/>
            <person name="Nasr F."/>
            <person name="Nicaud J.-M."/>
            <person name="Niedenthal R.K."/>
            <person name="Pandolfo D."/>
            <person name="Pierard A."/>
            <person name="Piravandi E."/>
            <person name="Planta R.J."/>
            <person name="Pohl T.M."/>
            <person name="Purnelle B."/>
            <person name="Rebischung C."/>
            <person name="Remacha M.A."/>
            <person name="Revuelta J.L."/>
            <person name="Rinke M."/>
            <person name="Saiz J.E."/>
            <person name="Sartorello F."/>
            <person name="Scherens B."/>
            <person name="Sen-Gupta M."/>
            <person name="Soler-Mira A."/>
            <person name="Urbanus J.H.M."/>
            <person name="Valle G."/>
            <person name="Van Dyck L."/>
            <person name="Verhasselt P."/>
            <person name="Vierendeels F."/>
            <person name="Vissers S."/>
            <person name="Voet M."/>
            <person name="Volckaert G."/>
            <person name="Wach A."/>
            <person name="Wambutt R."/>
            <person name="Wedler H."/>
            <person name="Zollner A."/>
            <person name="Hani J."/>
        </authorList>
    </citation>
    <scope>NUCLEOTIDE SEQUENCE [LARGE SCALE GENOMIC DNA]</scope>
    <source>
        <strain>ATCC 204508 / S288c</strain>
    </source>
</reference>
<reference key="5">
    <citation type="journal article" date="2014" name="G3 (Bethesda)">
        <title>The reference genome sequence of Saccharomyces cerevisiae: Then and now.</title>
        <authorList>
            <person name="Engel S.R."/>
            <person name="Dietrich F.S."/>
            <person name="Fisk D.G."/>
            <person name="Binkley G."/>
            <person name="Balakrishnan R."/>
            <person name="Costanzo M.C."/>
            <person name="Dwight S.S."/>
            <person name="Hitz B.C."/>
            <person name="Karra K."/>
            <person name="Nash R.S."/>
            <person name="Weng S."/>
            <person name="Wong E.D."/>
            <person name="Lloyd P."/>
            <person name="Skrzypek M.S."/>
            <person name="Miyasato S.R."/>
            <person name="Simison M."/>
            <person name="Cherry J.M."/>
        </authorList>
    </citation>
    <scope>GENOME REANNOTATION</scope>
    <source>
        <strain>ATCC 204508 / S288c</strain>
    </source>
</reference>
<reference key="6">
    <citation type="journal article" date="1994" name="Science">
        <title>[URE3] as an altered URE2 protein: evidence for a prion analog in Saccharomyces cerevisiae.</title>
        <authorList>
            <person name="Wickner R.B."/>
        </authorList>
    </citation>
    <scope>PRION FORMATION</scope>
</reference>
<reference key="7">
    <citation type="journal article" date="1995" name="Science">
        <title>Prion-inducing domain of yeast Ure2p and protease resistance of Ure2p in prion-containing cells.</title>
        <authorList>
            <person name="Masison D.C."/>
            <person name="Wickner R.B."/>
        </authorList>
    </citation>
    <scope>DOMAIN PRION</scope>
</reference>
<reference key="8">
    <citation type="journal article" date="1996" name="J. Bacteriol.">
        <title>Interaction of the GATA factor Gln3p with the nitrogen regulator Ure2p in Saccharomyces cerevisiae.</title>
        <authorList>
            <person name="Blinder D."/>
            <person name="Coschigano P.W."/>
            <person name="Magasanik B."/>
        </authorList>
    </citation>
    <scope>FUNCTION</scope>
</reference>
<reference key="9">
    <citation type="journal article" date="1999" name="Nature">
        <title>The TOR signalling pathway controls nuclear localization of nutrient-regulated transcription factors.</title>
        <authorList>
            <person name="Beck T."/>
            <person name="Hall M.N."/>
        </authorList>
    </citation>
    <scope>FUNCTION</scope>
    <scope>SUBCELLULAR LOCATION</scope>
</reference>
<reference key="10">
    <citation type="journal article" date="2000" name="J. Biol. Chem.">
        <title>Nitrogen catabolite repression of DAL80 expression depends on the relative levels of Gat1p and Ure2p production in Saccharomyces cerevisiae.</title>
        <authorList>
            <person name="Cunningham T.S."/>
            <person name="Andhare R."/>
            <person name="Cooper T.G."/>
        </authorList>
    </citation>
    <scope>FUNCTION</scope>
</reference>
<reference key="11">
    <citation type="journal article" date="2000" name="Mol. Cell. Biol.">
        <title>[URE3] prion propagation in Saccharomyces cerevisiae: requirement for chaperone Hsp104 and curing by overexpressed chaperone Ydj1p.</title>
        <authorList>
            <person name="Moriyama H."/>
            <person name="Edskes H.K."/>
            <person name="Wickner R.B."/>
        </authorList>
    </citation>
    <scope>PRION FORMATION</scope>
    <scope>PRION CURING</scope>
</reference>
<reference key="12">
    <citation type="journal article" date="2003" name="Nature">
        <title>Global analysis of protein expression in yeast.</title>
        <authorList>
            <person name="Ghaemmaghami S."/>
            <person name="Huh W.-K."/>
            <person name="Bower K."/>
            <person name="Howson R.W."/>
            <person name="Belle A."/>
            <person name="Dephoure N."/>
            <person name="O'Shea E.K."/>
            <person name="Weissman J.S."/>
        </authorList>
    </citation>
    <scope>LEVEL OF PROTEIN EXPRESSION [LARGE SCALE ANALYSIS]</scope>
</reference>
<reference key="13">
    <citation type="journal article" date="2004" name="J. Biol. Chem.">
        <title>The yeast prion protein Ure2 shows glutathione peroxidase activity in both native and fibrillar forms.</title>
        <authorList>
            <person name="Bai M."/>
            <person name="Zhou J.M."/>
            <person name="Perrett S."/>
        </authorList>
    </citation>
    <scope>FUNCTION</scope>
</reference>
<reference key="14">
    <citation type="journal article" date="2008" name="Mol. Cell. Proteomics">
        <title>A multidimensional chromatography technology for in-depth phosphoproteome analysis.</title>
        <authorList>
            <person name="Albuquerque C.P."/>
            <person name="Smolka M.B."/>
            <person name="Payne S.H."/>
            <person name="Bafna V."/>
            <person name="Eng J."/>
            <person name="Zhou H."/>
        </authorList>
    </citation>
    <scope>IDENTIFICATION BY MASS SPECTROMETRY [LARGE SCALE ANALYSIS]</scope>
</reference>
<reference key="15">
    <citation type="journal article" date="2009" name="J. Biol. Chem.">
        <title>Novel glutaredoxin activity of the yeast prion protein Ure2 reveals a native-like dimer within fibrils.</title>
        <authorList>
            <person name="Zhang Z.R."/>
            <person name="Perrett S."/>
        </authorList>
    </citation>
    <scope>FUNCTION</scope>
    <scope>CATALYTIC ACTIVITY</scope>
    <scope>BIOPHYSICOCHEMICAL PROPERTIES</scope>
    <scope>MUTAGENESIS OF ALA-122 AND ASN-124</scope>
</reference>
<reference key="16">
    <citation type="journal article" date="2010" name="Science">
        <title>A global protein kinase and phosphatase interaction network in yeast.</title>
        <authorList>
            <person name="Breitkreutz A."/>
            <person name="Choi H."/>
            <person name="Sharom J.R."/>
            <person name="Boucher L."/>
            <person name="Neduva V."/>
            <person name="Larsen B."/>
            <person name="Lin Z.Y."/>
            <person name="Breitkreutz B.J."/>
            <person name="Stark C."/>
            <person name="Liu G."/>
            <person name="Ahn J."/>
            <person name="Dewar-Darch D."/>
            <person name="Reguly T."/>
            <person name="Tang X."/>
            <person name="Almeida R."/>
            <person name="Qin Z.S."/>
            <person name="Pawson T."/>
            <person name="Gingras A.C."/>
            <person name="Nesvizhskii A.I."/>
            <person name="Tyers M."/>
        </authorList>
    </citation>
    <scope>INTERACTION WITH NNK1</scope>
</reference>
<reference key="17">
    <citation type="journal article" date="2012" name="Proc. Natl. Acad. Sci. U.S.A.">
        <title>N-terminal acetylome analyses and functional insights of the N-terminal acetyltransferase NatB.</title>
        <authorList>
            <person name="Van Damme P."/>
            <person name="Lasa M."/>
            <person name="Polevoda B."/>
            <person name="Gazquez C."/>
            <person name="Elosegui-Artola A."/>
            <person name="Kim D.S."/>
            <person name="De Juan-Pardo E."/>
            <person name="Demeyer K."/>
            <person name="Hole K."/>
            <person name="Larrea E."/>
            <person name="Timmerman E."/>
            <person name="Prieto J."/>
            <person name="Arnesen T."/>
            <person name="Sherman F."/>
            <person name="Gevaert K."/>
            <person name="Aldabe R."/>
        </authorList>
    </citation>
    <scope>ACETYLATION [LARGE SCALE ANALYSIS] AT MET-2</scope>
    <scope>CLEAVAGE OF INITIATOR METHIONINE [LARGE SCALE ANALYSIS]</scope>
    <scope>IDENTIFICATION BY MASS SPECTROMETRY [LARGE SCALE ANALYSIS]</scope>
</reference>
<reference key="18">
    <citation type="journal article" date="2001" name="Biochemistry">
        <title>Crystal structures of the yeast prion Ure2p functional region in complex with glutathione and related compounds.</title>
        <authorList>
            <person name="Bousset L."/>
            <person name="Belrhali H."/>
            <person name="Melki R."/>
            <person name="Morera S."/>
        </authorList>
    </citation>
    <scope>X-RAY CRYSTALLOGRAPHY (2.20 ANGSTROMS) OF 95-354 IN COMPLEX WITH GLUTATHIONE AND INHIBITORS</scope>
</reference>
<reference key="19">
    <citation type="journal article" date="2001" name="Proc. Natl. Acad. Sci. U.S.A.">
        <title>The crystal structure of the nitrogen regulation fragment of the yeast prion protein Ure2p.</title>
        <authorList>
            <person name="Umland T.C."/>
            <person name="Taylor K.L."/>
            <person name="Rhee S."/>
            <person name="Wickner R.B."/>
            <person name="Davies D.R."/>
        </authorList>
    </citation>
    <scope>X-RAY CRYSTALLOGRAPHY (2.30 ANGSTROMS) OF 97-354</scope>
</reference>
<reference key="20">
    <citation type="journal article" date="2001" name="Structure">
        <title>Structure of the globular region of the prion protein Ure2 from the yeast Saccharomyces cerevisiae.</title>
        <authorList>
            <person name="Bousset L."/>
            <person name="Belrhali H."/>
            <person name="Janin J."/>
            <person name="Melki R."/>
            <person name="Morera S."/>
        </authorList>
    </citation>
    <scope>X-RAY CRYSTALLOGRAPHY (2.5 ANGSTROMS) OF 100-353</scope>
</reference>
<reference key="21">
    <citation type="journal article" date="2005" name="Biochemistry">
        <title>Parallel beta-sheets and polar zippers in amyloid fibrils formed by residues 10-39 of the yeast prion protein Ure2p.</title>
        <authorList>
            <person name="Chan J.C."/>
            <person name="Oyler N.A."/>
            <person name="Yau W.M."/>
            <person name="Tycko R."/>
        </authorList>
    </citation>
    <scope>STRUCTURE BY NMR OF 10-39</scope>
</reference>
<reference key="22">
    <citation type="journal article" date="2007" name="Biochemistry">
        <title>Characterization of beta-sheet structure in Ure2p(1-89) yeast prion fibrils by solid-state nuclear magnetic resonance.</title>
        <authorList>
            <person name="Baxa U."/>
            <person name="Wickner R.B."/>
            <person name="Steven A.C."/>
            <person name="Anderson D.E."/>
            <person name="Marekov L.N."/>
            <person name="Yau W.M."/>
            <person name="Tycko R."/>
        </authorList>
    </citation>
    <scope>STRUCTURE BY NMR OF 1-89</scope>
    <scope>DOMAIN PRION</scope>
</reference>
<keyword id="KW-0002">3D-structure</keyword>
<keyword id="KW-0007">Acetylation</keyword>
<keyword id="KW-0034">Amyloid</keyword>
<keyword id="KW-0963">Cytoplasm</keyword>
<keyword id="KW-0534">Nitrate assimilation</keyword>
<keyword id="KW-0560">Oxidoreductase</keyword>
<keyword id="KW-0640">Prion</keyword>
<keyword id="KW-1185">Reference proteome</keyword>
<sequence length="354" mass="40271">MMNNNGNQVSNLSNALRQVNIGNRNSNTTTDQSNINFEFSTGVNNNNNNNSSSNNNNVQNNNSGRNGSQNNDNENNIKNTLEQHRQQQQAFSDMSHVEYSRITKFFQEQPLEGYTLFSHRSAPNGFKVAIVLSELGFHYNTIFLDFNLGEHRAPEFVSVNPNARVPALIDHGMDNLSIWESGAILLHLVNKYYKETGNPLLWSDDLADQSQINAWLFFQTSGHAPMIGQALHFRYFHSQKIASAVERYTDEVRRVYGVVEMALAERREALVMELDTENAAAYSAGTTPMSQSRFFDYPVWLVGDKLTIADLAFVPWNNVVDRIGINIKIEFPEVYKWTKHMMRRPAVIKALRGE</sequence>
<organism>
    <name type="scientific">Saccharomyces cerevisiae (strain ATCC 204508 / S288c)</name>
    <name type="common">Baker's yeast</name>
    <dbReference type="NCBI Taxonomy" id="559292"/>
    <lineage>
        <taxon>Eukaryota</taxon>
        <taxon>Fungi</taxon>
        <taxon>Dikarya</taxon>
        <taxon>Ascomycota</taxon>
        <taxon>Saccharomycotina</taxon>
        <taxon>Saccharomycetes</taxon>
        <taxon>Saccharomycetales</taxon>
        <taxon>Saccharomycetaceae</taxon>
        <taxon>Saccharomyces</taxon>
    </lineage>
</organism>
<name>URE2_YEAST</name>
<dbReference type="EC" id="1.8.4.-"/>
<dbReference type="EC" id="1.11.1.9"/>
<dbReference type="EMBL" id="M35268">
    <property type="protein sequence ID" value="AAA35201.1"/>
    <property type="molecule type" value="Genomic_DNA"/>
</dbReference>
<dbReference type="EMBL" id="AF525174">
    <property type="protein sequence ID" value="AAM93167.1"/>
    <property type="molecule type" value="Genomic_DNA"/>
</dbReference>
<dbReference type="EMBL" id="AF525175">
    <property type="protein sequence ID" value="AAM93168.1"/>
    <property type="molecule type" value="Genomic_DNA"/>
</dbReference>
<dbReference type="EMBL" id="AF525176">
    <property type="protein sequence ID" value="AAM93169.1"/>
    <property type="molecule type" value="Genomic_DNA"/>
</dbReference>
<dbReference type="EMBL" id="AF525177">
    <property type="protein sequence ID" value="AAM93170.1"/>
    <property type="molecule type" value="Genomic_DNA"/>
</dbReference>
<dbReference type="EMBL" id="AF525178">
    <property type="protein sequence ID" value="AAM93171.1"/>
    <property type="molecule type" value="Genomic_DNA"/>
</dbReference>
<dbReference type="EMBL" id="AF525179">
    <property type="protein sequence ID" value="AAM93172.1"/>
    <property type="molecule type" value="Genomic_DNA"/>
</dbReference>
<dbReference type="EMBL" id="AF525180">
    <property type="protein sequence ID" value="AAM93173.1"/>
    <property type="molecule type" value="Genomic_DNA"/>
</dbReference>
<dbReference type="EMBL" id="AF525181">
    <property type="protein sequence ID" value="AAM93174.1"/>
    <property type="molecule type" value="Genomic_DNA"/>
</dbReference>
<dbReference type="EMBL" id="AF525182">
    <property type="protein sequence ID" value="AAM93175.1"/>
    <property type="molecule type" value="Genomic_DNA"/>
</dbReference>
<dbReference type="EMBL" id="AF525183">
    <property type="protein sequence ID" value="AAM93176.1"/>
    <property type="molecule type" value="Genomic_DNA"/>
</dbReference>
<dbReference type="EMBL" id="AF525184">
    <property type="protein sequence ID" value="AAM93177.1"/>
    <property type="molecule type" value="Genomic_DNA"/>
</dbReference>
<dbReference type="EMBL" id="AF525185">
    <property type="protein sequence ID" value="AAM93178.1"/>
    <property type="molecule type" value="Genomic_DNA"/>
</dbReference>
<dbReference type="EMBL" id="AF525186">
    <property type="protein sequence ID" value="AAM93179.1"/>
    <property type="molecule type" value="Genomic_DNA"/>
</dbReference>
<dbReference type="EMBL" id="AF525187">
    <property type="protein sequence ID" value="AAM93180.1"/>
    <property type="molecule type" value="Genomic_DNA"/>
</dbReference>
<dbReference type="EMBL" id="AF525188">
    <property type="protein sequence ID" value="AAM93181.1"/>
    <property type="molecule type" value="Genomic_DNA"/>
</dbReference>
<dbReference type="EMBL" id="AF525189">
    <property type="protein sequence ID" value="AAM93182.1"/>
    <property type="molecule type" value="Genomic_DNA"/>
</dbReference>
<dbReference type="EMBL" id="AF525190">
    <property type="protein sequence ID" value="AAM93183.1"/>
    <property type="molecule type" value="Genomic_DNA"/>
</dbReference>
<dbReference type="EMBL" id="AF525191">
    <property type="protein sequence ID" value="AAM93184.1"/>
    <property type="molecule type" value="Genomic_DNA"/>
</dbReference>
<dbReference type="EMBL" id="AF525192">
    <property type="protein sequence ID" value="AAM93185.1"/>
    <property type="molecule type" value="Genomic_DNA"/>
</dbReference>
<dbReference type="EMBL" id="Z69381">
    <property type="protein sequence ID" value="CAA93369.1"/>
    <property type="molecule type" value="Genomic_DNA"/>
</dbReference>
<dbReference type="EMBL" id="Z71505">
    <property type="protein sequence ID" value="CAA96134.1"/>
    <property type="molecule type" value="Genomic_DNA"/>
</dbReference>
<dbReference type="EMBL" id="BK006947">
    <property type="protein sequence ID" value="DAA10329.1"/>
    <property type="molecule type" value="Genomic_DNA"/>
</dbReference>
<dbReference type="PIR" id="A39609">
    <property type="entry name" value="A39609"/>
</dbReference>
<dbReference type="RefSeq" id="NP_014170.1">
    <property type="nucleotide sequence ID" value="NM_001183067.1"/>
</dbReference>
<dbReference type="PDB" id="1G6W">
    <property type="method" value="X-ray"/>
    <property type="resolution" value="2.50 A"/>
    <property type="chains" value="A/B/C/D=94-354"/>
</dbReference>
<dbReference type="PDB" id="1G6Y">
    <property type="method" value="X-ray"/>
    <property type="resolution" value="2.80 A"/>
    <property type="chains" value="A/B=94-354"/>
</dbReference>
<dbReference type="PDB" id="1HQO">
    <property type="method" value="X-ray"/>
    <property type="resolution" value="2.30 A"/>
    <property type="chains" value="A/B=97-354"/>
</dbReference>
<dbReference type="PDB" id="1JZR">
    <property type="method" value="X-ray"/>
    <property type="resolution" value="2.90 A"/>
    <property type="chains" value="A/B/C/D=95-354"/>
</dbReference>
<dbReference type="PDB" id="1K0A">
    <property type="method" value="X-ray"/>
    <property type="resolution" value="2.50 A"/>
    <property type="chains" value="A/B=95-354"/>
</dbReference>
<dbReference type="PDB" id="1K0B">
    <property type="method" value="X-ray"/>
    <property type="resolution" value="2.50 A"/>
    <property type="chains" value="A/B/C/D=95-354"/>
</dbReference>
<dbReference type="PDB" id="1K0C">
    <property type="method" value="X-ray"/>
    <property type="resolution" value="2.50 A"/>
    <property type="chains" value="A/B/C/D=95-354"/>
</dbReference>
<dbReference type="PDB" id="1K0D">
    <property type="method" value="X-ray"/>
    <property type="resolution" value="2.20 A"/>
    <property type="chains" value="A/B/C/D=95-354"/>
</dbReference>
<dbReference type="PDBsum" id="1G6W"/>
<dbReference type="PDBsum" id="1G6Y"/>
<dbReference type="PDBsum" id="1HQO"/>
<dbReference type="PDBsum" id="1JZR"/>
<dbReference type="PDBsum" id="1K0A"/>
<dbReference type="PDBsum" id="1K0B"/>
<dbReference type="PDBsum" id="1K0C"/>
<dbReference type="PDBsum" id="1K0D"/>
<dbReference type="BMRB" id="P23202"/>
<dbReference type="SMR" id="P23202"/>
<dbReference type="BioGRID" id="35609">
    <property type="interactions" value="372"/>
</dbReference>
<dbReference type="DIP" id="DIP-1308N"/>
<dbReference type="FunCoup" id="P23202">
    <property type="interactions" value="905"/>
</dbReference>
<dbReference type="IntAct" id="P23202">
    <property type="interactions" value="49"/>
</dbReference>
<dbReference type="MINT" id="P23202"/>
<dbReference type="STRING" id="4932.YNL229C"/>
<dbReference type="MoonProt" id="P23202"/>
<dbReference type="iPTMnet" id="P23202"/>
<dbReference type="PaxDb" id="4932-YNL229C"/>
<dbReference type="PeptideAtlas" id="P23202"/>
<dbReference type="EnsemblFungi" id="YNL229C_mRNA">
    <property type="protein sequence ID" value="YNL229C"/>
    <property type="gene ID" value="YNL229C"/>
</dbReference>
<dbReference type="GeneID" id="855492"/>
<dbReference type="KEGG" id="sce:YNL229C"/>
<dbReference type="AGR" id="SGD:S000005173"/>
<dbReference type="SGD" id="S000005173">
    <property type="gene designation" value="URE2"/>
</dbReference>
<dbReference type="VEuPathDB" id="FungiDB:YNL229C"/>
<dbReference type="eggNOG" id="KOG0867">
    <property type="taxonomic scope" value="Eukaryota"/>
</dbReference>
<dbReference type="HOGENOM" id="CLU_011226_14_1_1"/>
<dbReference type="InParanoid" id="P23202"/>
<dbReference type="OMA" id="YEPHRID"/>
<dbReference type="OrthoDB" id="422574at2759"/>
<dbReference type="BioCyc" id="YEAST:YNL229C-MONOMER"/>
<dbReference type="BioGRID-ORCS" id="855492">
    <property type="hits" value="0 hits in 10 CRISPR screens"/>
</dbReference>
<dbReference type="EvolutionaryTrace" id="P23202"/>
<dbReference type="PRO" id="PR:P23202"/>
<dbReference type="Proteomes" id="UP000002311">
    <property type="component" value="Chromosome XIV"/>
</dbReference>
<dbReference type="RNAct" id="P23202">
    <property type="molecule type" value="protein"/>
</dbReference>
<dbReference type="GO" id="GO:0005737">
    <property type="term" value="C:cytoplasm"/>
    <property type="evidence" value="ECO:0000314"/>
    <property type="project" value="SGD"/>
</dbReference>
<dbReference type="GO" id="GO:0004602">
    <property type="term" value="F:glutathione peroxidase activity"/>
    <property type="evidence" value="ECO:0000314"/>
    <property type="project" value="SGD"/>
</dbReference>
<dbReference type="GO" id="GO:0004364">
    <property type="term" value="F:glutathione transferase activity"/>
    <property type="evidence" value="ECO:0000318"/>
    <property type="project" value="GO_Central"/>
</dbReference>
<dbReference type="GO" id="GO:0051219">
    <property type="term" value="F:phosphoprotein binding"/>
    <property type="evidence" value="ECO:0000314"/>
    <property type="project" value="SGD"/>
</dbReference>
<dbReference type="GO" id="GO:0003714">
    <property type="term" value="F:transcription corepressor activity"/>
    <property type="evidence" value="ECO:0007669"/>
    <property type="project" value="InterPro"/>
</dbReference>
<dbReference type="GO" id="GO:0010621">
    <property type="term" value="P:negative regulation of transcription by transcription factor localization"/>
    <property type="evidence" value="ECO:0000315"/>
    <property type="project" value="SGD"/>
</dbReference>
<dbReference type="GO" id="GO:0042128">
    <property type="term" value="P:nitrate assimilation"/>
    <property type="evidence" value="ECO:0007669"/>
    <property type="project" value="UniProtKB-KW"/>
</dbReference>
<dbReference type="GO" id="GO:0032447">
    <property type="term" value="P:protein urmylation"/>
    <property type="evidence" value="ECO:0000315"/>
    <property type="project" value="SGD"/>
</dbReference>
<dbReference type="GO" id="GO:0006808">
    <property type="term" value="P:regulation of nitrogen utilization"/>
    <property type="evidence" value="ECO:0000315"/>
    <property type="project" value="SGD"/>
</dbReference>
<dbReference type="CDD" id="cd10293">
    <property type="entry name" value="GST_C_Ure2p"/>
    <property type="match status" value="1"/>
</dbReference>
<dbReference type="CDD" id="cd03048">
    <property type="entry name" value="GST_N_Ure2p_like"/>
    <property type="match status" value="1"/>
</dbReference>
<dbReference type="DisProt" id="DP00353"/>
<dbReference type="FunFam" id="3.40.30.10:FF:000222">
    <property type="entry name" value="Protein URE2"/>
    <property type="match status" value="1"/>
</dbReference>
<dbReference type="FunFam" id="1.20.1050.10:FF:000034">
    <property type="entry name" value="Transcriptional regulator URE2"/>
    <property type="match status" value="1"/>
</dbReference>
<dbReference type="Gene3D" id="1.20.1050.10">
    <property type="match status" value="1"/>
</dbReference>
<dbReference type="Gene3D" id="3.40.30.10">
    <property type="entry name" value="Glutaredoxin"/>
    <property type="match status" value="1"/>
</dbReference>
<dbReference type="InterPro" id="IPR010987">
    <property type="entry name" value="Glutathione-S-Trfase_C-like"/>
</dbReference>
<dbReference type="InterPro" id="IPR036282">
    <property type="entry name" value="Glutathione-S-Trfase_C_sf"/>
</dbReference>
<dbReference type="InterPro" id="IPR040079">
    <property type="entry name" value="Glutathione_S-Trfase"/>
</dbReference>
<dbReference type="InterPro" id="IPR004045">
    <property type="entry name" value="Glutathione_S-Trfase_N"/>
</dbReference>
<dbReference type="InterPro" id="IPR004046">
    <property type="entry name" value="GST_C"/>
</dbReference>
<dbReference type="InterPro" id="IPR036249">
    <property type="entry name" value="Thioredoxin-like_sf"/>
</dbReference>
<dbReference type="InterPro" id="IPR017298">
    <property type="entry name" value="Ure2"/>
</dbReference>
<dbReference type="PANTHER" id="PTHR44051">
    <property type="entry name" value="GLUTATHIONE S-TRANSFERASE-RELATED"/>
    <property type="match status" value="1"/>
</dbReference>
<dbReference type="PANTHER" id="PTHR44051:SF3">
    <property type="entry name" value="TRANSCRIPTIONAL REGULATOR URE2"/>
    <property type="match status" value="1"/>
</dbReference>
<dbReference type="Pfam" id="PF00043">
    <property type="entry name" value="GST_C"/>
    <property type="match status" value="1"/>
</dbReference>
<dbReference type="Pfam" id="PF02798">
    <property type="entry name" value="GST_N"/>
    <property type="match status" value="1"/>
</dbReference>
<dbReference type="PIRSF" id="PIRSF037861">
    <property type="entry name" value="Prion_URE2"/>
    <property type="match status" value="1"/>
</dbReference>
<dbReference type="SFLD" id="SFLDS00019">
    <property type="entry name" value="Glutathione_Transferase_(cytos"/>
    <property type="match status" value="1"/>
</dbReference>
<dbReference type="SFLD" id="SFLDG00358">
    <property type="entry name" value="Main_(cytGST)"/>
    <property type="match status" value="1"/>
</dbReference>
<dbReference type="SUPFAM" id="SSF47616">
    <property type="entry name" value="GST C-terminal domain-like"/>
    <property type="match status" value="1"/>
</dbReference>
<dbReference type="SUPFAM" id="SSF52833">
    <property type="entry name" value="Thioredoxin-like"/>
    <property type="match status" value="1"/>
</dbReference>
<dbReference type="PROSITE" id="PS50405">
    <property type="entry name" value="GST_CTER"/>
    <property type="match status" value="1"/>
</dbReference>
<dbReference type="PROSITE" id="PS50404">
    <property type="entry name" value="GST_NTER"/>
    <property type="match status" value="1"/>
</dbReference>
<proteinExistence type="evidence at protein level"/>
<evidence type="ECO:0000256" key="1">
    <source>
        <dbReference type="SAM" id="MobiDB-lite"/>
    </source>
</evidence>
<evidence type="ECO:0000269" key="2">
    <source>
    </source>
</evidence>
<evidence type="ECO:0000269" key="3">
    <source>
    </source>
</evidence>
<evidence type="ECO:0000269" key="4">
    <source>
    </source>
</evidence>
<evidence type="ECO:0000269" key="5">
    <source>
    </source>
</evidence>
<evidence type="ECO:0000269" key="6">
    <source>
    </source>
</evidence>
<evidence type="ECO:0000269" key="7">
    <source>
    </source>
</evidence>
<evidence type="ECO:0000269" key="8">
    <source>
    </source>
</evidence>
<evidence type="ECO:0000269" key="9">
    <source>
    </source>
</evidence>
<evidence type="ECO:0000269" key="10">
    <source>
    </source>
</evidence>
<evidence type="ECO:0000269" key="11">
    <source>
    </source>
</evidence>
<evidence type="ECO:0000269" key="12">
    <source>
    </source>
</evidence>
<evidence type="ECO:0000305" key="13"/>
<evidence type="ECO:0000305" key="14">
    <source>
    </source>
</evidence>
<evidence type="ECO:0000305" key="15">
    <source>
    </source>
</evidence>
<evidence type="ECO:0007744" key="16">
    <source>
    </source>
</evidence>
<evidence type="ECO:0007829" key="17">
    <source>
        <dbReference type="PDB" id="1G6W"/>
    </source>
</evidence>
<evidence type="ECO:0007829" key="18">
    <source>
        <dbReference type="PDB" id="1K0B"/>
    </source>
</evidence>
<evidence type="ECO:0007829" key="19">
    <source>
        <dbReference type="PDB" id="1K0D"/>
    </source>
</evidence>
<feature type="initiator methionine" description="Removed" evidence="16">
    <location>
        <position position="1"/>
    </location>
</feature>
<feature type="chain" id="PRO_0000186013" description="Transcriptional regulator URE2">
    <location>
        <begin position="2"/>
        <end position="354"/>
    </location>
</feature>
<feature type="domain" description="GST N-terminal">
    <location>
        <begin position="112"/>
        <end position="196"/>
    </location>
</feature>
<feature type="domain" description="GST C-terminal">
    <location>
        <begin position="205"/>
        <end position="354"/>
    </location>
</feature>
<feature type="region of interest" description="Prion domain (PrD)">
    <location>
        <begin position="2"/>
        <end position="89"/>
    </location>
</feature>
<feature type="region of interest" description="Disordered" evidence="1">
    <location>
        <begin position="22"/>
        <end position="76"/>
    </location>
</feature>
<feature type="compositionally biased region" description="Polar residues" evidence="1">
    <location>
        <begin position="22"/>
        <end position="42"/>
    </location>
</feature>
<feature type="compositionally biased region" description="Low complexity" evidence="1">
    <location>
        <begin position="43"/>
        <end position="73"/>
    </location>
</feature>
<feature type="binding site" evidence="4">
    <location>
        <position position="124"/>
    </location>
    <ligand>
        <name>glutathione</name>
        <dbReference type="ChEBI" id="CHEBI:57925"/>
    </ligand>
</feature>
<feature type="binding site" evidence="4">
    <location>
        <position position="151"/>
    </location>
    <ligand>
        <name>glutathione</name>
        <dbReference type="ChEBI" id="CHEBI:57925"/>
    </ligand>
</feature>
<feature type="binding site">
    <location>
        <begin position="164"/>
        <end position="165"/>
    </location>
    <ligand>
        <name>glutathione</name>
        <dbReference type="ChEBI" id="CHEBI:57925"/>
    </ligand>
</feature>
<feature type="binding site">
    <location>
        <begin position="180"/>
        <end position="181"/>
    </location>
    <ligand>
        <name>glutathione</name>
        <dbReference type="ChEBI" id="CHEBI:57925"/>
    </ligand>
</feature>
<feature type="modified residue" description="N-acetylmethionine" evidence="16">
    <location>
        <position position="2"/>
    </location>
</feature>
<feature type="mutagenesis site" description="Reduces glutaredoxin activity." evidence="8">
    <original>A</original>
    <variation>S</variation>
    <location>
        <position position="122"/>
    </location>
</feature>
<feature type="mutagenesis site" description="Abolishes glutaredoxin activity." evidence="8">
    <original>N</original>
    <variation>A</variation>
    <variation>V</variation>
    <location>
        <position position="124"/>
    </location>
</feature>
<feature type="mutagenesis site" description="Destroys protein function.">
    <original>F</original>
    <variation>S</variation>
    <location>
        <position position="313"/>
    </location>
</feature>
<feature type="helix" evidence="19">
    <location>
        <begin position="101"/>
        <end position="105"/>
    </location>
</feature>
<feature type="strand" evidence="19">
    <location>
        <begin position="111"/>
        <end position="118"/>
    </location>
</feature>
<feature type="helix" evidence="19">
    <location>
        <begin position="123"/>
        <end position="134"/>
    </location>
</feature>
<feature type="strand" evidence="19">
    <location>
        <begin position="139"/>
        <end position="143"/>
    </location>
</feature>
<feature type="turn" evidence="19">
    <location>
        <begin position="146"/>
        <end position="149"/>
    </location>
</feature>
<feature type="helix" evidence="19">
    <location>
        <begin position="150"/>
        <end position="152"/>
    </location>
</feature>
<feature type="helix" evidence="19">
    <location>
        <begin position="154"/>
        <end position="157"/>
    </location>
</feature>
<feature type="strand" evidence="19">
    <location>
        <begin position="167"/>
        <end position="170"/>
    </location>
</feature>
<feature type="turn" evidence="19">
    <location>
        <begin position="171"/>
        <end position="175"/>
    </location>
</feature>
<feature type="strand" evidence="19">
    <location>
        <begin position="176"/>
        <end position="180"/>
    </location>
</feature>
<feature type="helix" evidence="19">
    <location>
        <begin position="181"/>
        <end position="196"/>
    </location>
</feature>
<feature type="helix" evidence="19">
    <location>
        <begin position="206"/>
        <end position="222"/>
    </location>
</feature>
<feature type="helix" evidence="19">
    <location>
        <begin position="224"/>
        <end position="235"/>
    </location>
</feature>
<feature type="strand" evidence="17">
    <location>
        <begin position="237"/>
        <end position="239"/>
    </location>
</feature>
<feature type="helix" evidence="19">
    <location>
        <begin position="242"/>
        <end position="271"/>
    </location>
</feature>
<feature type="turn" evidence="18">
    <location>
        <begin position="276"/>
        <end position="278"/>
    </location>
</feature>
<feature type="helix" evidence="17">
    <location>
        <begin position="279"/>
        <end position="284"/>
    </location>
</feature>
<feature type="strand" evidence="17">
    <location>
        <begin position="285"/>
        <end position="287"/>
    </location>
</feature>
<feature type="helix" evidence="17">
    <location>
        <begin position="289"/>
        <end position="291"/>
    </location>
</feature>
<feature type="helix" evidence="17">
    <location>
        <begin position="293"/>
        <end position="295"/>
    </location>
</feature>
<feature type="helix" evidence="19">
    <location>
        <begin position="308"/>
        <end position="311"/>
    </location>
</feature>
<feature type="helix" evidence="19">
    <location>
        <begin position="314"/>
        <end position="317"/>
    </location>
</feature>
<feature type="helix" evidence="19">
    <location>
        <begin position="320"/>
        <end position="323"/>
    </location>
</feature>
<feature type="helix" evidence="19">
    <location>
        <begin position="327"/>
        <end position="330"/>
    </location>
</feature>
<feature type="helix" evidence="19">
    <location>
        <begin position="332"/>
        <end position="342"/>
    </location>
</feature>
<feature type="helix" evidence="19">
    <location>
        <begin position="345"/>
        <end position="350"/>
    </location>
</feature>